<comment type="function">
    <text evidence="1">Involved in the synthesis of autoinducer 2 (AI-2) which is secreted by bacteria and is used to communicate both the cell density and the metabolic potential of the environment. The regulation of gene expression in response to changes in cell density is called quorum sensing. Catalyzes the transformation of S-ribosylhomocysteine (RHC) to homocysteine (HC) and 4,5-dihydroxy-2,3-pentadione (DPD).</text>
</comment>
<comment type="catalytic activity">
    <reaction evidence="1">
        <text>S-(5-deoxy-D-ribos-5-yl)-L-homocysteine = (S)-4,5-dihydroxypentane-2,3-dione + L-homocysteine</text>
        <dbReference type="Rhea" id="RHEA:17753"/>
        <dbReference type="ChEBI" id="CHEBI:29484"/>
        <dbReference type="ChEBI" id="CHEBI:58195"/>
        <dbReference type="ChEBI" id="CHEBI:58199"/>
        <dbReference type="EC" id="4.4.1.21"/>
    </reaction>
</comment>
<comment type="cofactor">
    <cofactor evidence="1">
        <name>Fe cation</name>
        <dbReference type="ChEBI" id="CHEBI:24875"/>
    </cofactor>
    <text evidence="1">Binds 1 Fe cation per subunit.</text>
</comment>
<comment type="subunit">
    <text evidence="1">Homodimer.</text>
</comment>
<comment type="similarity">
    <text evidence="1">Belongs to the LuxS family.</text>
</comment>
<keyword id="KW-0071">Autoinducer synthesis</keyword>
<keyword id="KW-0408">Iron</keyword>
<keyword id="KW-0456">Lyase</keyword>
<keyword id="KW-0479">Metal-binding</keyword>
<keyword id="KW-0673">Quorum sensing</keyword>
<gene>
    <name evidence="1" type="primary">luxS</name>
    <name type="ordered locus">HSM_1663</name>
</gene>
<proteinExistence type="inferred from homology"/>
<feature type="chain" id="PRO_1000075454" description="S-ribosylhomocysteine lyase">
    <location>
        <begin position="1"/>
        <end position="168"/>
    </location>
</feature>
<feature type="binding site" evidence="1">
    <location>
        <position position="54"/>
    </location>
    <ligand>
        <name>Fe cation</name>
        <dbReference type="ChEBI" id="CHEBI:24875"/>
    </ligand>
</feature>
<feature type="binding site" evidence="1">
    <location>
        <position position="58"/>
    </location>
    <ligand>
        <name>Fe cation</name>
        <dbReference type="ChEBI" id="CHEBI:24875"/>
    </ligand>
</feature>
<feature type="binding site" evidence="1">
    <location>
        <position position="128"/>
    </location>
    <ligand>
        <name>Fe cation</name>
        <dbReference type="ChEBI" id="CHEBI:24875"/>
    </ligand>
</feature>
<dbReference type="EC" id="4.4.1.21" evidence="1"/>
<dbReference type="EMBL" id="CP000947">
    <property type="protein sequence ID" value="ACA31433.1"/>
    <property type="molecule type" value="Genomic_DNA"/>
</dbReference>
<dbReference type="RefSeq" id="WP_012340791.1">
    <property type="nucleotide sequence ID" value="NC_010519.1"/>
</dbReference>
<dbReference type="SMR" id="B0UVD9"/>
<dbReference type="STRING" id="228400.HSM_1663"/>
<dbReference type="GeneID" id="31487966"/>
<dbReference type="KEGG" id="hsm:HSM_1663"/>
<dbReference type="HOGENOM" id="CLU_107531_2_0_6"/>
<dbReference type="GO" id="GO:0005506">
    <property type="term" value="F:iron ion binding"/>
    <property type="evidence" value="ECO:0007669"/>
    <property type="project" value="InterPro"/>
</dbReference>
<dbReference type="GO" id="GO:0043768">
    <property type="term" value="F:S-ribosylhomocysteine lyase activity"/>
    <property type="evidence" value="ECO:0007669"/>
    <property type="project" value="UniProtKB-UniRule"/>
</dbReference>
<dbReference type="GO" id="GO:0009372">
    <property type="term" value="P:quorum sensing"/>
    <property type="evidence" value="ECO:0007669"/>
    <property type="project" value="UniProtKB-UniRule"/>
</dbReference>
<dbReference type="Gene3D" id="3.30.1360.80">
    <property type="entry name" value="S-ribosylhomocysteinase (LuxS)"/>
    <property type="match status" value="1"/>
</dbReference>
<dbReference type="HAMAP" id="MF_00091">
    <property type="entry name" value="LuxS"/>
    <property type="match status" value="1"/>
</dbReference>
<dbReference type="InterPro" id="IPR037005">
    <property type="entry name" value="LuxS_sf"/>
</dbReference>
<dbReference type="InterPro" id="IPR011249">
    <property type="entry name" value="Metalloenz_LuxS/M16"/>
</dbReference>
<dbReference type="InterPro" id="IPR003815">
    <property type="entry name" value="S-ribosylhomocysteinase"/>
</dbReference>
<dbReference type="NCBIfam" id="NF002602">
    <property type="entry name" value="PRK02260.1-2"/>
    <property type="match status" value="1"/>
</dbReference>
<dbReference type="PANTHER" id="PTHR35799">
    <property type="entry name" value="S-RIBOSYLHOMOCYSTEINE LYASE"/>
    <property type="match status" value="1"/>
</dbReference>
<dbReference type="PANTHER" id="PTHR35799:SF1">
    <property type="entry name" value="S-RIBOSYLHOMOCYSTEINE LYASE"/>
    <property type="match status" value="1"/>
</dbReference>
<dbReference type="Pfam" id="PF02664">
    <property type="entry name" value="LuxS"/>
    <property type="match status" value="1"/>
</dbReference>
<dbReference type="PIRSF" id="PIRSF006160">
    <property type="entry name" value="AI2"/>
    <property type="match status" value="1"/>
</dbReference>
<dbReference type="PRINTS" id="PR01487">
    <property type="entry name" value="LUXSPROTEIN"/>
</dbReference>
<dbReference type="SUPFAM" id="SSF63411">
    <property type="entry name" value="LuxS/MPP-like metallohydrolase"/>
    <property type="match status" value="1"/>
</dbReference>
<organism>
    <name type="scientific">Histophilus somni (strain 2336)</name>
    <name type="common">Haemophilus somnus</name>
    <dbReference type="NCBI Taxonomy" id="228400"/>
    <lineage>
        <taxon>Bacteria</taxon>
        <taxon>Pseudomonadati</taxon>
        <taxon>Pseudomonadota</taxon>
        <taxon>Gammaproteobacteria</taxon>
        <taxon>Pasteurellales</taxon>
        <taxon>Pasteurellaceae</taxon>
        <taxon>Histophilus</taxon>
    </lineage>
</organism>
<accession>B0UVD9</accession>
<evidence type="ECO:0000255" key="1">
    <source>
        <dbReference type="HAMAP-Rule" id="MF_00091"/>
    </source>
</evidence>
<name>LUXS_HISS2</name>
<protein>
    <recommendedName>
        <fullName evidence="1">S-ribosylhomocysteine lyase</fullName>
        <ecNumber evidence="1">4.4.1.21</ecNumber>
    </recommendedName>
    <alternativeName>
        <fullName evidence="1">AI-2 synthesis protein</fullName>
    </alternativeName>
    <alternativeName>
        <fullName evidence="1">Autoinducer-2 production protein LuxS</fullName>
    </alternativeName>
</protein>
<reference key="1">
    <citation type="submission" date="2008-02" db="EMBL/GenBank/DDBJ databases">
        <title>Complete sequence of Haemophilus somnus 2336.</title>
        <authorList>
            <consortium name="US DOE Joint Genome Institute"/>
            <person name="Siddaramappa S."/>
            <person name="Duncan A.J."/>
            <person name="Challacombe J.F."/>
            <person name="Rainey D."/>
            <person name="Gillaspy A.F."/>
            <person name="Carson M."/>
            <person name="Gipson J."/>
            <person name="Gipson M."/>
            <person name="Bruce D."/>
            <person name="Detter J.C."/>
            <person name="Han C.S."/>
            <person name="Land M."/>
            <person name="Tapia R."/>
            <person name="Thompson L.S."/>
            <person name="Orvis J."/>
            <person name="Zaitshik J."/>
            <person name="Barnes G."/>
            <person name="Brettin T.S."/>
            <person name="Dyer D.W."/>
            <person name="Inzana T.J."/>
        </authorList>
    </citation>
    <scope>NUCLEOTIDE SEQUENCE [LARGE SCALE GENOMIC DNA]</scope>
    <source>
        <strain>2336</strain>
    </source>
</reference>
<sequence length="168" mass="18982">MPLLDSFKVDHTRMNAPAVRVAKTMRTPKGDNITVFDLRFCIPNKEILSPKGIHTLEHLFAGFMRDHLNSEQIEIIDISPMGCRTGFYMSLIGMPNEQQVANAWSASMQDILNVKNQAEIPELNEYQCGTYTEHSLEDAHNIARNILNRGVGINKNEDLLLDDNLLNS</sequence>